<comment type="function">
    <text evidence="1">DNA-dependent RNA polymerase catalyzes the transcription of DNA into RNA using the four ribonucleoside triphosphates as substrates.</text>
</comment>
<comment type="catalytic activity">
    <reaction evidence="1">
        <text>RNA(n) + a ribonucleoside 5'-triphosphate = RNA(n+1) + diphosphate</text>
        <dbReference type="Rhea" id="RHEA:21248"/>
        <dbReference type="Rhea" id="RHEA-COMP:14527"/>
        <dbReference type="Rhea" id="RHEA-COMP:17342"/>
        <dbReference type="ChEBI" id="CHEBI:33019"/>
        <dbReference type="ChEBI" id="CHEBI:61557"/>
        <dbReference type="ChEBI" id="CHEBI:140395"/>
        <dbReference type="EC" id="2.7.7.6"/>
    </reaction>
</comment>
<comment type="subunit">
    <text evidence="1">The RNAP catalytic core consists of 2 alpha, 1 beta, 1 beta' and 1 omega subunit. When a sigma factor is associated with the core the holoenzyme is formed, which can initiate transcription.</text>
</comment>
<comment type="similarity">
    <text evidence="1">Belongs to the RNA polymerase beta chain family.</text>
</comment>
<organism>
    <name type="scientific">Escherichia coli O157:H7</name>
    <dbReference type="NCBI Taxonomy" id="83334"/>
    <lineage>
        <taxon>Bacteria</taxon>
        <taxon>Pseudomonadati</taxon>
        <taxon>Pseudomonadota</taxon>
        <taxon>Gammaproteobacteria</taxon>
        <taxon>Enterobacterales</taxon>
        <taxon>Enterobacteriaceae</taxon>
        <taxon>Escherichia</taxon>
    </lineage>
</organism>
<dbReference type="EC" id="2.7.7.6" evidence="1"/>
<dbReference type="EMBL" id="AE005174">
    <property type="protein sequence ID" value="AAG59183.1"/>
    <property type="molecule type" value="Genomic_DNA"/>
</dbReference>
<dbReference type="EMBL" id="BA000007">
    <property type="protein sequence ID" value="BAB38333.1"/>
    <property type="molecule type" value="Genomic_DNA"/>
</dbReference>
<dbReference type="PIR" id="F91242">
    <property type="entry name" value="F91242"/>
</dbReference>
<dbReference type="RefSeq" id="NP_312937.1">
    <property type="nucleotide sequence ID" value="NC_002695.1"/>
</dbReference>
<dbReference type="RefSeq" id="WP_000263098.1">
    <property type="nucleotide sequence ID" value="NZ_VOAI01000037.1"/>
</dbReference>
<dbReference type="EMDB" id="EMD-11418"/>
<dbReference type="EMDB" id="EMD-11420"/>
<dbReference type="EMDB" id="EMD-11421"/>
<dbReference type="EMDB" id="EMD-11422"/>
<dbReference type="EMDB" id="EMD-11423"/>
<dbReference type="EMDB" id="EMD-11426"/>
<dbReference type="EMDB" id="EMD-11725"/>
<dbReference type="EMDB" id="EMD-12157"/>
<dbReference type="EMDB" id="EMD-13706"/>
<dbReference type="EMDB" id="EMD-13707"/>
<dbReference type="EMDB" id="EMD-13709"/>
<dbReference type="EMDB" id="EMD-13713"/>
<dbReference type="EMDB" id="EMD-13714"/>
<dbReference type="EMDB" id="EMD-13715"/>
<dbReference type="EMDB" id="EMD-13716"/>
<dbReference type="EMDB" id="EMD-13717"/>
<dbReference type="EMDB" id="EMD-13718"/>
<dbReference type="EMDB" id="EMD-13745"/>
<dbReference type="EMDB" id="EMD-13746"/>
<dbReference type="EMDB" id="EMD-17586"/>
<dbReference type="EMDB" id="EMD-20203"/>
<dbReference type="EMDB" id="EMD-20460"/>
<dbReference type="EMDB" id="EMD-20461"/>
<dbReference type="EMDB" id="EMD-20462"/>
<dbReference type="EMDB" id="EMD-20463"/>
<dbReference type="EMDB" id="EMD-20464"/>
<dbReference type="EMDB" id="EMD-20465"/>
<dbReference type="EMDB" id="EMD-20466"/>
<dbReference type="EMDB" id="EMD-21386"/>
<dbReference type="EMDB" id="EMD-21469"/>
<dbReference type="EMDB" id="EMD-21470"/>
<dbReference type="EMDB" id="EMD-21471"/>
<dbReference type="EMDB" id="EMD-21472"/>
<dbReference type="EMDB" id="EMD-21474"/>
<dbReference type="EMDB" id="EMD-21475"/>
<dbReference type="EMDB" id="EMD-21476"/>
<dbReference type="EMDB" id="EMD-21477"/>
<dbReference type="EMDB" id="EMD-21482"/>
<dbReference type="EMDB" id="EMD-21483"/>
<dbReference type="EMDB" id="EMD-21485"/>
<dbReference type="EMDB" id="EMD-21494"/>
<dbReference type="EMDB" id="EMD-21853"/>
<dbReference type="EMDB" id="EMD-22006"/>
<dbReference type="EMDB" id="EMD-22012"/>
<dbReference type="EMDB" id="EMD-22039"/>
<dbReference type="EMDB" id="EMD-22043"/>
<dbReference type="EMDB" id="EMD-22044"/>
<dbReference type="EMDB" id="EMD-22045"/>
<dbReference type="EMDB" id="EMD-22082"/>
<dbReference type="EMDB" id="EMD-22084"/>
<dbReference type="EMDB" id="EMD-22087"/>
<dbReference type="EMDB" id="EMD-22107"/>
<dbReference type="EMDB" id="EMD-22141"/>
<dbReference type="EMDB" id="EMD-22142"/>
<dbReference type="EMDB" id="EMD-22181"/>
<dbReference type="EMDB" id="EMD-22192"/>
<dbReference type="EMDB" id="EMD-22193"/>
<dbReference type="EMDB" id="EMD-23716"/>
<dbReference type="EMDB" id="EMD-23892"/>
<dbReference type="EMDB" id="EMD-23893"/>
<dbReference type="EMDB" id="EMD-23895"/>
<dbReference type="EMDB" id="EMD-23897"/>
<dbReference type="EMDB" id="EMD-24148"/>
<dbReference type="EMDB" id="EMD-26438"/>
<dbReference type="EMDB" id="EMD-26439"/>
<dbReference type="EMDB" id="EMD-26830"/>
<dbReference type="EMDB" id="EMD-26832"/>
<dbReference type="EMDB" id="EMD-27864"/>
<dbReference type="EMDB" id="EMD-27913"/>
<dbReference type="EMDB" id="EMD-27916"/>
<dbReference type="EMDB" id="EMD-27930"/>
<dbReference type="EMDB" id="EMD-27931"/>
<dbReference type="EMDB" id="EMD-28109"/>
<dbReference type="EMDB" id="EMD-28110"/>
<dbReference type="EMDB" id="EMD-28113"/>
<dbReference type="EMDB" id="EMD-28143"/>
<dbReference type="EMDB" id="EMD-28144"/>
<dbReference type="EMDB" id="EMD-28145"/>
<dbReference type="EMDB" id="EMD-28146"/>
<dbReference type="EMDB" id="EMD-28148"/>
<dbReference type="SMR" id="P0A8V4"/>
<dbReference type="MINT" id="P0A8V4"/>
<dbReference type="STRING" id="155864.Z5560"/>
<dbReference type="GeneID" id="914942"/>
<dbReference type="GeneID" id="93777907"/>
<dbReference type="KEGG" id="ece:Z5560"/>
<dbReference type="KEGG" id="ecs:ECs_4910"/>
<dbReference type="PATRIC" id="fig|386585.9.peg.5134"/>
<dbReference type="eggNOG" id="COG0085">
    <property type="taxonomic scope" value="Bacteria"/>
</dbReference>
<dbReference type="HOGENOM" id="CLU_000524_4_3_6"/>
<dbReference type="OMA" id="FMTWEGY"/>
<dbReference type="Proteomes" id="UP000000558">
    <property type="component" value="Chromosome"/>
</dbReference>
<dbReference type="Proteomes" id="UP000002519">
    <property type="component" value="Chromosome"/>
</dbReference>
<dbReference type="GO" id="GO:0000428">
    <property type="term" value="C:DNA-directed RNA polymerase complex"/>
    <property type="evidence" value="ECO:0007669"/>
    <property type="project" value="UniProtKB-KW"/>
</dbReference>
<dbReference type="GO" id="GO:0003677">
    <property type="term" value="F:DNA binding"/>
    <property type="evidence" value="ECO:0007669"/>
    <property type="project" value="UniProtKB-UniRule"/>
</dbReference>
<dbReference type="GO" id="GO:0003899">
    <property type="term" value="F:DNA-directed RNA polymerase activity"/>
    <property type="evidence" value="ECO:0007669"/>
    <property type="project" value="UniProtKB-UniRule"/>
</dbReference>
<dbReference type="GO" id="GO:0032549">
    <property type="term" value="F:ribonucleoside binding"/>
    <property type="evidence" value="ECO:0007669"/>
    <property type="project" value="InterPro"/>
</dbReference>
<dbReference type="GO" id="GO:0006351">
    <property type="term" value="P:DNA-templated transcription"/>
    <property type="evidence" value="ECO:0007669"/>
    <property type="project" value="UniProtKB-UniRule"/>
</dbReference>
<dbReference type="CDD" id="cd00653">
    <property type="entry name" value="RNA_pol_B_RPB2"/>
    <property type="match status" value="1"/>
</dbReference>
<dbReference type="FunFam" id="2.30.150.10:FF:000001">
    <property type="entry name" value="DNA-directed RNA polymerase subunit beta"/>
    <property type="match status" value="1"/>
</dbReference>
<dbReference type="FunFam" id="2.40.270.10:FF:000003">
    <property type="entry name" value="DNA-directed RNA polymerase subunit beta"/>
    <property type="match status" value="1"/>
</dbReference>
<dbReference type="FunFam" id="2.40.270.10:FF:000004">
    <property type="entry name" value="DNA-directed RNA polymerase subunit beta"/>
    <property type="match status" value="1"/>
</dbReference>
<dbReference type="FunFam" id="2.40.50.100:FF:000006">
    <property type="entry name" value="DNA-directed RNA polymerase subunit beta"/>
    <property type="match status" value="1"/>
</dbReference>
<dbReference type="FunFam" id="2.40.50.150:FF:000001">
    <property type="entry name" value="DNA-directed RNA polymerase subunit beta"/>
    <property type="match status" value="1"/>
</dbReference>
<dbReference type="FunFam" id="3.90.1100.10:FF:000002">
    <property type="entry name" value="DNA-directed RNA polymerase subunit beta"/>
    <property type="match status" value="1"/>
</dbReference>
<dbReference type="FunFam" id="3.90.1110.10:FF:000001">
    <property type="entry name" value="DNA-directed RNA polymerase subunit beta"/>
    <property type="match status" value="1"/>
</dbReference>
<dbReference type="FunFam" id="3.90.1110.10:FF:000004">
    <property type="entry name" value="DNA-directed RNA polymerase subunit beta"/>
    <property type="match status" value="1"/>
</dbReference>
<dbReference type="FunFam" id="3.90.1800.10:FF:000001">
    <property type="entry name" value="DNA-directed RNA polymerase subunit beta"/>
    <property type="match status" value="1"/>
</dbReference>
<dbReference type="Gene3D" id="2.40.50.100">
    <property type="match status" value="1"/>
</dbReference>
<dbReference type="Gene3D" id="2.40.50.150">
    <property type="match status" value="1"/>
</dbReference>
<dbReference type="Gene3D" id="3.90.1100.10">
    <property type="match status" value="2"/>
</dbReference>
<dbReference type="Gene3D" id="6.10.140.1670">
    <property type="match status" value="1"/>
</dbReference>
<dbReference type="Gene3D" id="2.30.150.10">
    <property type="entry name" value="DNA-directed RNA polymerase, beta subunit, external 1 domain"/>
    <property type="match status" value="1"/>
</dbReference>
<dbReference type="Gene3D" id="2.40.270.10">
    <property type="entry name" value="DNA-directed RNA polymerase, subunit 2, domain 6"/>
    <property type="match status" value="1"/>
</dbReference>
<dbReference type="Gene3D" id="3.90.1800.10">
    <property type="entry name" value="RNA polymerase alpha subunit dimerisation domain"/>
    <property type="match status" value="1"/>
</dbReference>
<dbReference type="Gene3D" id="3.90.1110.10">
    <property type="entry name" value="RNA polymerase Rpb2, domain 2"/>
    <property type="match status" value="1"/>
</dbReference>
<dbReference type="HAMAP" id="MF_01321">
    <property type="entry name" value="RNApol_bact_RpoB"/>
    <property type="match status" value="1"/>
</dbReference>
<dbReference type="InterPro" id="IPR042107">
    <property type="entry name" value="DNA-dir_RNA_pol_bsu_ext_1_sf"/>
</dbReference>
<dbReference type="InterPro" id="IPR019462">
    <property type="entry name" value="DNA-dir_RNA_pol_bsu_external_1"/>
</dbReference>
<dbReference type="InterPro" id="IPR015712">
    <property type="entry name" value="DNA-dir_RNA_pol_su2"/>
</dbReference>
<dbReference type="InterPro" id="IPR007120">
    <property type="entry name" value="DNA-dir_RNAP_su2_dom"/>
</dbReference>
<dbReference type="InterPro" id="IPR037033">
    <property type="entry name" value="DNA-dir_RNAP_su2_hyb_sf"/>
</dbReference>
<dbReference type="InterPro" id="IPR010243">
    <property type="entry name" value="RNA_pol_bsu_bac"/>
</dbReference>
<dbReference type="InterPro" id="IPR007121">
    <property type="entry name" value="RNA_pol_bsu_CS"/>
</dbReference>
<dbReference type="InterPro" id="IPR007644">
    <property type="entry name" value="RNA_pol_bsu_protrusion"/>
</dbReference>
<dbReference type="InterPro" id="IPR007642">
    <property type="entry name" value="RNA_pol_Rpb2_2"/>
</dbReference>
<dbReference type="InterPro" id="IPR037034">
    <property type="entry name" value="RNA_pol_Rpb2_2_sf"/>
</dbReference>
<dbReference type="InterPro" id="IPR007645">
    <property type="entry name" value="RNA_pol_Rpb2_3"/>
</dbReference>
<dbReference type="InterPro" id="IPR007641">
    <property type="entry name" value="RNA_pol_Rpb2_7"/>
</dbReference>
<dbReference type="InterPro" id="IPR014724">
    <property type="entry name" value="RNA_pol_RPB2_OB-fold"/>
</dbReference>
<dbReference type="NCBIfam" id="NF001616">
    <property type="entry name" value="PRK00405.1"/>
    <property type="match status" value="1"/>
</dbReference>
<dbReference type="NCBIfam" id="TIGR02013">
    <property type="entry name" value="rpoB"/>
    <property type="match status" value="1"/>
</dbReference>
<dbReference type="PANTHER" id="PTHR20856">
    <property type="entry name" value="DNA-DIRECTED RNA POLYMERASE I SUBUNIT 2"/>
    <property type="match status" value="1"/>
</dbReference>
<dbReference type="Pfam" id="PF04563">
    <property type="entry name" value="RNA_pol_Rpb2_1"/>
    <property type="match status" value="1"/>
</dbReference>
<dbReference type="Pfam" id="PF04561">
    <property type="entry name" value="RNA_pol_Rpb2_2"/>
    <property type="match status" value="2"/>
</dbReference>
<dbReference type="Pfam" id="PF04565">
    <property type="entry name" value="RNA_pol_Rpb2_3"/>
    <property type="match status" value="1"/>
</dbReference>
<dbReference type="Pfam" id="PF10385">
    <property type="entry name" value="RNA_pol_Rpb2_45"/>
    <property type="match status" value="1"/>
</dbReference>
<dbReference type="Pfam" id="PF00562">
    <property type="entry name" value="RNA_pol_Rpb2_6"/>
    <property type="match status" value="1"/>
</dbReference>
<dbReference type="Pfam" id="PF04560">
    <property type="entry name" value="RNA_pol_Rpb2_7"/>
    <property type="match status" value="1"/>
</dbReference>
<dbReference type="SUPFAM" id="SSF64484">
    <property type="entry name" value="beta and beta-prime subunits of DNA dependent RNA-polymerase"/>
    <property type="match status" value="1"/>
</dbReference>
<dbReference type="PROSITE" id="PS01166">
    <property type="entry name" value="RNA_POL_BETA"/>
    <property type="match status" value="1"/>
</dbReference>
<keyword id="KW-0007">Acetylation</keyword>
<keyword id="KW-0240">DNA-directed RNA polymerase</keyword>
<keyword id="KW-0548">Nucleotidyltransferase</keyword>
<keyword id="KW-1185">Reference proteome</keyword>
<keyword id="KW-0804">Transcription</keyword>
<keyword id="KW-0808">Transferase</keyword>
<reference key="1">
    <citation type="journal article" date="2001" name="Nature">
        <title>Genome sequence of enterohaemorrhagic Escherichia coli O157:H7.</title>
        <authorList>
            <person name="Perna N.T."/>
            <person name="Plunkett G. III"/>
            <person name="Burland V."/>
            <person name="Mau B."/>
            <person name="Glasner J.D."/>
            <person name="Rose D.J."/>
            <person name="Mayhew G.F."/>
            <person name="Evans P.S."/>
            <person name="Gregor J."/>
            <person name="Kirkpatrick H.A."/>
            <person name="Posfai G."/>
            <person name="Hackett J."/>
            <person name="Klink S."/>
            <person name="Boutin A."/>
            <person name="Shao Y."/>
            <person name="Miller L."/>
            <person name="Grotbeck E.J."/>
            <person name="Davis N.W."/>
            <person name="Lim A."/>
            <person name="Dimalanta E.T."/>
            <person name="Potamousis K."/>
            <person name="Apodaca J."/>
            <person name="Anantharaman T.S."/>
            <person name="Lin J."/>
            <person name="Yen G."/>
            <person name="Schwartz D.C."/>
            <person name="Welch R.A."/>
            <person name="Blattner F.R."/>
        </authorList>
    </citation>
    <scope>NUCLEOTIDE SEQUENCE [LARGE SCALE GENOMIC DNA]</scope>
    <source>
        <strain>O157:H7 / EDL933 / ATCC 700927 / EHEC</strain>
    </source>
</reference>
<reference key="2">
    <citation type="journal article" date="2001" name="DNA Res.">
        <title>Complete genome sequence of enterohemorrhagic Escherichia coli O157:H7 and genomic comparison with a laboratory strain K-12.</title>
        <authorList>
            <person name="Hayashi T."/>
            <person name="Makino K."/>
            <person name="Ohnishi M."/>
            <person name="Kurokawa K."/>
            <person name="Ishii K."/>
            <person name="Yokoyama K."/>
            <person name="Han C.-G."/>
            <person name="Ohtsubo E."/>
            <person name="Nakayama K."/>
            <person name="Murata T."/>
            <person name="Tanaka M."/>
            <person name="Tobe T."/>
            <person name="Iida T."/>
            <person name="Takami H."/>
            <person name="Honda T."/>
            <person name="Sasakawa C."/>
            <person name="Ogasawara N."/>
            <person name="Yasunaga T."/>
            <person name="Kuhara S."/>
            <person name="Shiba T."/>
            <person name="Hattori M."/>
            <person name="Shinagawa H."/>
        </authorList>
    </citation>
    <scope>NUCLEOTIDE SEQUENCE [LARGE SCALE GENOMIC DNA]</scope>
    <source>
        <strain>O157:H7 / Sakai / RIMD 0509952 / EHEC</strain>
    </source>
</reference>
<feature type="chain" id="PRO_0000047894" description="DNA-directed RNA polymerase subunit beta">
    <location>
        <begin position="1"/>
        <end position="1342"/>
    </location>
</feature>
<feature type="modified residue" description="N6-acetyllysine" evidence="1">
    <location>
        <position position="1022"/>
    </location>
</feature>
<feature type="modified residue" description="N6-acetyllysine" evidence="1">
    <location>
        <position position="1200"/>
    </location>
</feature>
<proteinExistence type="inferred from homology"/>
<accession>P0A8V4</accession>
<accession>P00575</accession>
<accession>P00576</accession>
<accession>P78242</accession>
<gene>
    <name evidence="1" type="primary">rpoB</name>
    <name type="ordered locus">Z5560</name>
    <name type="ordered locus">ECs4910</name>
</gene>
<sequence length="1342" mass="150632">MVYSYTEKKRIRKDFGKRPQVLDVPYLLSIQLDSFQKFIEQDPEGQYGLEAAFRSVFPIQSYSGNSELQYVSYRLGEPVFDVQECQIRGVTYSAPLRVKLRLVIYEREAPEGTVKDIKEQEVYMGEIPLMTDNGTFVINGTERVIVSQLHRSPGVFFDSDKGKTHSSGKVLYNARIIPYRGSWLDFEFDPKDNLFVRIDRRRKLPATIILRALNYTTEQILDLFFEKVIFEIRDNKLQMELVPERLRGETASFDIEANGKVYVEKGRRITARHIRQLEKDDVKLIEVPVEYIAGKVVAKDYIDESTGELICAANMELSLDLLAKLSQSGHKRIETLFTNDLDHGPYISETLRVDPTNDRLSALVEIYRMMRPGEPPTREAAESLFENLFFSEDRYDLSAVGRMKFNRSLLREEIEGSGILSKDDIIDVMKKLIDIRNGKGEVDDIDHLGNRRIRSVGEMAENQFRVGLVRVERAVKERLSLGDLDTLMPQDMINAKPISAAVKEFFGSSQLSQFMDQNNPLSEITHKRRISALGPGGLTRERAGFEVRDVHPTHYGRVCPIETPEGPNIGLINSLSVYAQTNEYGFLETPYRKVTDGVVTDEIHYLSAIEEGNYVIAQANSNLDEEGHFVEDLVTCRSKGESSLFSRDQVDYMDVSTQQVVSVGASLIPFLEHDDANRALMGANMQRQAVPTLRADKPLVGTGMERAVAVDSGVTAVAKRGGVVQYVDASRIVIKVNEDEMYPGEAGIDIYNLTKYTRSNQNTCINQMPCVSLGEPVERGDVLADGPSTDLGELALGQNMRVAFMPWNGYNFEDSILVSERVVQEDRFTTIHIQELACVSRDTKLGPEEITADIPNVGEAALSKLDESGIVYIGAEVTGGDILVGKVTPKGETQLTPEEKLLRAIFGEKASDVKDSSLRVPNGVSGTVIDVQVFTRDGVEKDKRALEIEEMQLKQAKKDLSEELQILEAGLFSRIRAVLVAGGVEAEKLDKLPRDRWLELGLTDEEKQNQLEQLAEQYDELKHEFEKKLEAKRRKITQGDDLAPGVLKIVKVYLAVKRRIQPGDKMAGRHGNKGVISKINPIEDMPYDENGTPVDIVLNPLGVPSRMNIGQILETHLGMAAKGIGDKINAMLKQQQEVAKLREFIQRAYDLGADVRQKVDLSTFSDEEVMRLAENLRKGMPIATPVFDGAKEAEIKELLKLGDLPTSGQIRLYDGRTGEQFERPVTVGYMYMLKLNHLVDDKMHARSTGSYSLVTQQPLGGKAQFGGQRFGEMEVWALEAYGAAYTLQEMLTVKSDDVNGRTKMYKNIVDGNHQMEPGMPESFNVLLKEIRSLGINIELEDE</sequence>
<name>RPOB_ECO57</name>
<protein>
    <recommendedName>
        <fullName evidence="1">DNA-directed RNA polymerase subunit beta</fullName>
        <shortName evidence="1">RNAP subunit beta</shortName>
        <ecNumber evidence="1">2.7.7.6</ecNumber>
    </recommendedName>
    <alternativeName>
        <fullName evidence="1">RNA polymerase subunit beta</fullName>
    </alternativeName>
    <alternativeName>
        <fullName evidence="1">Transcriptase subunit beta</fullName>
    </alternativeName>
</protein>
<evidence type="ECO:0000255" key="1">
    <source>
        <dbReference type="HAMAP-Rule" id="MF_01321"/>
    </source>
</evidence>